<gene>
    <name evidence="1" type="primary">glmM</name>
    <name type="ordered locus">GbCGDNIH1_1112</name>
</gene>
<name>GLMM_GRABC</name>
<comment type="function">
    <text evidence="1">Catalyzes the conversion of glucosamine-6-phosphate to glucosamine-1-phosphate.</text>
</comment>
<comment type="catalytic activity">
    <reaction evidence="1">
        <text>alpha-D-glucosamine 1-phosphate = D-glucosamine 6-phosphate</text>
        <dbReference type="Rhea" id="RHEA:23424"/>
        <dbReference type="ChEBI" id="CHEBI:58516"/>
        <dbReference type="ChEBI" id="CHEBI:58725"/>
        <dbReference type="EC" id="5.4.2.10"/>
    </reaction>
</comment>
<comment type="cofactor">
    <cofactor evidence="1">
        <name>Mg(2+)</name>
        <dbReference type="ChEBI" id="CHEBI:18420"/>
    </cofactor>
    <text evidence="1">Binds 1 Mg(2+) ion per subunit.</text>
</comment>
<comment type="PTM">
    <text evidence="1">Activated by phosphorylation.</text>
</comment>
<comment type="similarity">
    <text evidence="1">Belongs to the phosphohexose mutase family.</text>
</comment>
<evidence type="ECO:0000255" key="1">
    <source>
        <dbReference type="HAMAP-Rule" id="MF_01554"/>
    </source>
</evidence>
<keyword id="KW-0413">Isomerase</keyword>
<keyword id="KW-0460">Magnesium</keyword>
<keyword id="KW-0479">Metal-binding</keyword>
<keyword id="KW-0597">Phosphoprotein</keyword>
<keyword id="KW-1185">Reference proteome</keyword>
<feature type="chain" id="PRO_0000301321" description="Phosphoglucosamine mutase">
    <location>
        <begin position="1"/>
        <end position="457"/>
    </location>
</feature>
<feature type="active site" description="Phosphoserine intermediate" evidence="1">
    <location>
        <position position="103"/>
    </location>
</feature>
<feature type="binding site" description="via phosphate group" evidence="1">
    <location>
        <position position="103"/>
    </location>
    <ligand>
        <name>Mg(2+)</name>
        <dbReference type="ChEBI" id="CHEBI:18420"/>
    </ligand>
</feature>
<feature type="binding site" evidence="1">
    <location>
        <position position="244"/>
    </location>
    <ligand>
        <name>Mg(2+)</name>
        <dbReference type="ChEBI" id="CHEBI:18420"/>
    </ligand>
</feature>
<feature type="binding site" evidence="1">
    <location>
        <position position="246"/>
    </location>
    <ligand>
        <name>Mg(2+)</name>
        <dbReference type="ChEBI" id="CHEBI:18420"/>
    </ligand>
</feature>
<feature type="binding site" evidence="1">
    <location>
        <position position="248"/>
    </location>
    <ligand>
        <name>Mg(2+)</name>
        <dbReference type="ChEBI" id="CHEBI:18420"/>
    </ligand>
</feature>
<feature type="modified residue" description="Phosphoserine" evidence="1">
    <location>
        <position position="103"/>
    </location>
</feature>
<sequence>MTQKRLFGTDGIRGTANTAPMTAEIALRVGQAAGLLFTRGDHRHRVIIGKDTRLSGYMIEPALTAGFIGAGMDVTLVGPLPTPAIAMLTRSLRADLGVMISASHNPYEDNGIKLFGPDGEKLSDATEMEIERLLHADLSGQLAAPAALGRAARLEDAAGRYIESAKSTFPKSQRLDGLKIVLDCANGAAYRVAPTVLWELGATVIPLGVSPDGFNINSGCGSTAPDYLCAQVVKHGADLGIALDGDADRLLVSDERGHLVDGDQIIALIARSWSASGRLRGDGVVATVMSNLGLERFLKANGLILDRTRVGDRYVAEQMRATGRNIGGEQSGHVILSDYATTGDGLIAALQILSVLVEEGRPASETCRVFAPLPQKLKNVRYHRDNPLLHPRVKQAIADAESGLNGHGRLLIRRSGTEPLIRVMAEAEDETTVIRIVDELCDIIAVSAESETQVHLS</sequence>
<proteinExistence type="inferred from homology"/>
<reference key="1">
    <citation type="journal article" date="2007" name="J. Bacteriol.">
        <title>Genome sequence analysis of the emerging human pathogenic acetic acid bacterium Granulibacter bethesdensis.</title>
        <authorList>
            <person name="Greenberg D.E."/>
            <person name="Porcella S.F."/>
            <person name="Zelazny A.M."/>
            <person name="Virtaneva K."/>
            <person name="Sturdevant D.E."/>
            <person name="Kupko J.J. III"/>
            <person name="Barbian K.D."/>
            <person name="Babar A."/>
            <person name="Dorward D.W."/>
            <person name="Holland S.M."/>
        </authorList>
    </citation>
    <scope>NUCLEOTIDE SEQUENCE [LARGE SCALE GENOMIC DNA]</scope>
    <source>
        <strain>ATCC BAA-1260 / CGDNIH1</strain>
    </source>
</reference>
<protein>
    <recommendedName>
        <fullName evidence="1">Phosphoglucosamine mutase</fullName>
        <ecNumber evidence="1">5.4.2.10</ecNumber>
    </recommendedName>
</protein>
<accession>Q0BT42</accession>
<organism>
    <name type="scientific">Granulibacter bethesdensis (strain ATCC BAA-1260 / CGDNIH1)</name>
    <dbReference type="NCBI Taxonomy" id="391165"/>
    <lineage>
        <taxon>Bacteria</taxon>
        <taxon>Pseudomonadati</taxon>
        <taxon>Pseudomonadota</taxon>
        <taxon>Alphaproteobacteria</taxon>
        <taxon>Acetobacterales</taxon>
        <taxon>Acetobacteraceae</taxon>
        <taxon>Granulibacter</taxon>
    </lineage>
</organism>
<dbReference type="EC" id="5.4.2.10" evidence="1"/>
<dbReference type="EMBL" id="CP000394">
    <property type="protein sequence ID" value="ABI62010.1"/>
    <property type="molecule type" value="Genomic_DNA"/>
</dbReference>
<dbReference type="RefSeq" id="WP_011631819.1">
    <property type="nucleotide sequence ID" value="NC_008343.2"/>
</dbReference>
<dbReference type="SMR" id="Q0BT42"/>
<dbReference type="STRING" id="391165.GbCGDNIH1_1112"/>
<dbReference type="KEGG" id="gbe:GbCGDNIH1_1112"/>
<dbReference type="eggNOG" id="COG1109">
    <property type="taxonomic scope" value="Bacteria"/>
</dbReference>
<dbReference type="HOGENOM" id="CLU_016950_7_0_5"/>
<dbReference type="OrthoDB" id="9803322at2"/>
<dbReference type="Proteomes" id="UP000001963">
    <property type="component" value="Chromosome"/>
</dbReference>
<dbReference type="GO" id="GO:0005829">
    <property type="term" value="C:cytosol"/>
    <property type="evidence" value="ECO:0007669"/>
    <property type="project" value="TreeGrafter"/>
</dbReference>
<dbReference type="GO" id="GO:0000287">
    <property type="term" value="F:magnesium ion binding"/>
    <property type="evidence" value="ECO:0007669"/>
    <property type="project" value="UniProtKB-UniRule"/>
</dbReference>
<dbReference type="GO" id="GO:0008966">
    <property type="term" value="F:phosphoglucosamine mutase activity"/>
    <property type="evidence" value="ECO:0007669"/>
    <property type="project" value="UniProtKB-UniRule"/>
</dbReference>
<dbReference type="GO" id="GO:0004615">
    <property type="term" value="F:phosphomannomutase activity"/>
    <property type="evidence" value="ECO:0007669"/>
    <property type="project" value="TreeGrafter"/>
</dbReference>
<dbReference type="GO" id="GO:0005975">
    <property type="term" value="P:carbohydrate metabolic process"/>
    <property type="evidence" value="ECO:0007669"/>
    <property type="project" value="InterPro"/>
</dbReference>
<dbReference type="GO" id="GO:0009252">
    <property type="term" value="P:peptidoglycan biosynthetic process"/>
    <property type="evidence" value="ECO:0007669"/>
    <property type="project" value="TreeGrafter"/>
</dbReference>
<dbReference type="GO" id="GO:0006048">
    <property type="term" value="P:UDP-N-acetylglucosamine biosynthetic process"/>
    <property type="evidence" value="ECO:0007669"/>
    <property type="project" value="TreeGrafter"/>
</dbReference>
<dbReference type="CDD" id="cd05802">
    <property type="entry name" value="GlmM"/>
    <property type="match status" value="1"/>
</dbReference>
<dbReference type="FunFam" id="3.30.310.50:FF:000001">
    <property type="entry name" value="Phosphoglucosamine mutase"/>
    <property type="match status" value="1"/>
</dbReference>
<dbReference type="FunFam" id="3.40.120.10:FF:000001">
    <property type="entry name" value="Phosphoglucosamine mutase"/>
    <property type="match status" value="1"/>
</dbReference>
<dbReference type="FunFam" id="3.40.120.10:FF:000002">
    <property type="entry name" value="Phosphoglucosamine mutase"/>
    <property type="match status" value="1"/>
</dbReference>
<dbReference type="Gene3D" id="3.40.120.10">
    <property type="entry name" value="Alpha-D-Glucose-1,6-Bisphosphate, subunit A, domain 3"/>
    <property type="match status" value="3"/>
</dbReference>
<dbReference type="Gene3D" id="3.30.310.50">
    <property type="entry name" value="Alpha-D-phosphohexomutase, C-terminal domain"/>
    <property type="match status" value="1"/>
</dbReference>
<dbReference type="HAMAP" id="MF_01554_B">
    <property type="entry name" value="GlmM_B"/>
    <property type="match status" value="1"/>
</dbReference>
<dbReference type="InterPro" id="IPR005844">
    <property type="entry name" value="A-D-PHexomutase_a/b/a-I"/>
</dbReference>
<dbReference type="InterPro" id="IPR016055">
    <property type="entry name" value="A-D-PHexomutase_a/b/a-I/II/III"/>
</dbReference>
<dbReference type="InterPro" id="IPR005845">
    <property type="entry name" value="A-D-PHexomutase_a/b/a-II"/>
</dbReference>
<dbReference type="InterPro" id="IPR005846">
    <property type="entry name" value="A-D-PHexomutase_a/b/a-III"/>
</dbReference>
<dbReference type="InterPro" id="IPR005843">
    <property type="entry name" value="A-D-PHexomutase_C"/>
</dbReference>
<dbReference type="InterPro" id="IPR036900">
    <property type="entry name" value="A-D-PHexomutase_C_sf"/>
</dbReference>
<dbReference type="InterPro" id="IPR016066">
    <property type="entry name" value="A-D-PHexomutase_CS"/>
</dbReference>
<dbReference type="InterPro" id="IPR005841">
    <property type="entry name" value="Alpha-D-phosphohexomutase_SF"/>
</dbReference>
<dbReference type="InterPro" id="IPR006352">
    <property type="entry name" value="GlmM_bact"/>
</dbReference>
<dbReference type="InterPro" id="IPR050060">
    <property type="entry name" value="Phosphoglucosamine_mutase"/>
</dbReference>
<dbReference type="NCBIfam" id="TIGR01455">
    <property type="entry name" value="glmM"/>
    <property type="match status" value="1"/>
</dbReference>
<dbReference type="NCBIfam" id="NF008139">
    <property type="entry name" value="PRK10887.1"/>
    <property type="match status" value="1"/>
</dbReference>
<dbReference type="PANTHER" id="PTHR42946:SF1">
    <property type="entry name" value="PHOSPHOGLUCOMUTASE (ALPHA-D-GLUCOSE-1,6-BISPHOSPHATE-DEPENDENT)"/>
    <property type="match status" value="1"/>
</dbReference>
<dbReference type="PANTHER" id="PTHR42946">
    <property type="entry name" value="PHOSPHOHEXOSE MUTASE"/>
    <property type="match status" value="1"/>
</dbReference>
<dbReference type="Pfam" id="PF02878">
    <property type="entry name" value="PGM_PMM_I"/>
    <property type="match status" value="1"/>
</dbReference>
<dbReference type="Pfam" id="PF02879">
    <property type="entry name" value="PGM_PMM_II"/>
    <property type="match status" value="1"/>
</dbReference>
<dbReference type="Pfam" id="PF02880">
    <property type="entry name" value="PGM_PMM_III"/>
    <property type="match status" value="1"/>
</dbReference>
<dbReference type="Pfam" id="PF00408">
    <property type="entry name" value="PGM_PMM_IV"/>
    <property type="match status" value="1"/>
</dbReference>
<dbReference type="PRINTS" id="PR00509">
    <property type="entry name" value="PGMPMM"/>
</dbReference>
<dbReference type="SUPFAM" id="SSF55957">
    <property type="entry name" value="Phosphoglucomutase, C-terminal domain"/>
    <property type="match status" value="1"/>
</dbReference>
<dbReference type="SUPFAM" id="SSF53738">
    <property type="entry name" value="Phosphoglucomutase, first 3 domains"/>
    <property type="match status" value="3"/>
</dbReference>
<dbReference type="PROSITE" id="PS00710">
    <property type="entry name" value="PGM_PMM"/>
    <property type="match status" value="1"/>
</dbReference>